<reference key="1">
    <citation type="journal article" date="2002" name="Proc. Natl. Acad. Sci. U.S.A.">
        <title>Extensive mosaic structure revealed by the complete genome sequence of uropathogenic Escherichia coli.</title>
        <authorList>
            <person name="Welch R.A."/>
            <person name="Burland V."/>
            <person name="Plunkett G. III"/>
            <person name="Redford P."/>
            <person name="Roesch P."/>
            <person name="Rasko D."/>
            <person name="Buckles E.L."/>
            <person name="Liou S.-R."/>
            <person name="Boutin A."/>
            <person name="Hackett J."/>
            <person name="Stroud D."/>
            <person name="Mayhew G.F."/>
            <person name="Rose D.J."/>
            <person name="Zhou S."/>
            <person name="Schwartz D.C."/>
            <person name="Perna N.T."/>
            <person name="Mobley H.L.T."/>
            <person name="Donnenberg M.S."/>
            <person name="Blattner F.R."/>
        </authorList>
    </citation>
    <scope>NUCLEOTIDE SEQUENCE [LARGE SCALE GENOMIC DNA]</scope>
    <source>
        <strain>CFT073 / ATCC 700928 / UPEC</strain>
    </source>
</reference>
<evidence type="ECO:0000250" key="1"/>
<evidence type="ECO:0000255" key="2"/>
<evidence type="ECO:0000305" key="3"/>
<accession>P0AEY9</accession>
<accession>P71226</accession>
<accession>P75807</accession>
<accession>Q46966</accession>
<proteinExistence type="inferred from homology"/>
<keyword id="KW-0046">Antibiotic resistance</keyword>
<keyword id="KW-0997">Cell inner membrane</keyword>
<keyword id="KW-1003">Cell membrane</keyword>
<keyword id="KW-0472">Membrane</keyword>
<keyword id="KW-1185">Reference proteome</keyword>
<keyword id="KW-0812">Transmembrane</keyword>
<keyword id="KW-1133">Transmembrane helix</keyword>
<keyword id="KW-0813">Transport</keyword>
<protein>
    <recommendedName>
        <fullName>Multidrug transporter MdfA</fullName>
    </recommendedName>
    <alternativeName>
        <fullName>Chloramphenicol resistance pump Cmr</fullName>
    </alternativeName>
</protein>
<sequence length="410" mass="44321">MQNKLASGARLGRQALLFPLCLVLYEFSTYIGNDMIQPGMLAVVEQYQAGIDWVPTSMTAYLAGGMFLQWLLGPLSDRIGRRPVMLAGVVWFIVTCLAILLAQNIEQFTLLRFLQGISLCFIGAVGYAAIQESFEEAVCIKITALMANVALIAPLLGPLVGAAWIHVLPWEGMFVLFAALAAISFFGLQRAMPETATRIGEKLSLKELGRDYKLVLKNGRFVAGALALGFVSLPLLAWIAQSPIIIITGEQLSSYEYGLLQVPIFGALIAGNLLLARLTSRRTVRSLIIMGGWPIMIGLLVAAAATVISSHAYLWMTAGLSIYAFGIGLANAGLVRLTLFASDMSKGTVSAAMGMLQMLIFTVGIEISKHAWLNGGNGLFNLFNLVNGILWLSLMVIFLKDKQMGNSHEG</sequence>
<name>MDFA_ECOL6</name>
<feature type="chain" id="PRO_0000173333" description="Multidrug transporter MdfA">
    <location>
        <begin position="1"/>
        <end position="410"/>
    </location>
</feature>
<feature type="topological domain" description="Cytoplasmic" evidence="2">
    <location>
        <begin position="1"/>
        <end position="15"/>
    </location>
</feature>
<feature type="transmembrane region" description="Helical" evidence="2">
    <location>
        <begin position="16"/>
        <end position="36"/>
    </location>
</feature>
<feature type="topological domain" description="Periplasmic" evidence="2">
    <location>
        <begin position="37"/>
        <end position="52"/>
    </location>
</feature>
<feature type="transmembrane region" description="Helical" evidence="2">
    <location>
        <begin position="53"/>
        <end position="73"/>
    </location>
</feature>
<feature type="topological domain" description="Cytoplasmic" evidence="2">
    <location>
        <begin position="74"/>
        <end position="82"/>
    </location>
</feature>
<feature type="transmembrane region" description="Helical" evidence="2">
    <location>
        <begin position="83"/>
        <end position="103"/>
    </location>
</feature>
<feature type="topological domain" description="Periplasmic" evidence="2">
    <location>
        <begin position="104"/>
        <end position="109"/>
    </location>
</feature>
<feature type="transmembrane region" description="Helical" evidence="2">
    <location>
        <begin position="110"/>
        <end position="130"/>
    </location>
</feature>
<feature type="topological domain" description="Cytoplasmic" evidence="2">
    <location>
        <begin position="131"/>
        <end position="144"/>
    </location>
</feature>
<feature type="transmembrane region" description="Helical" evidence="2">
    <location>
        <begin position="145"/>
        <end position="165"/>
    </location>
</feature>
<feature type="topological domain" description="Periplasmic" evidence="2">
    <location>
        <position position="166"/>
    </location>
</feature>
<feature type="transmembrane region" description="Helical" evidence="2">
    <location>
        <begin position="167"/>
        <end position="187"/>
    </location>
</feature>
<feature type="topological domain" description="Cytoplasmic" evidence="2">
    <location>
        <begin position="188"/>
        <end position="226"/>
    </location>
</feature>
<feature type="transmembrane region" description="Helical" evidence="2">
    <location>
        <begin position="227"/>
        <end position="247"/>
    </location>
</feature>
<feature type="topological domain" description="Periplasmic" evidence="2">
    <location>
        <begin position="248"/>
        <end position="255"/>
    </location>
</feature>
<feature type="transmembrane region" description="Helical" evidence="2">
    <location>
        <begin position="256"/>
        <end position="276"/>
    </location>
</feature>
<feature type="topological domain" description="Cytoplasmic" evidence="2">
    <location>
        <begin position="277"/>
        <end position="287"/>
    </location>
</feature>
<feature type="transmembrane region" description="Helical" evidence="2">
    <location>
        <begin position="288"/>
        <end position="308"/>
    </location>
</feature>
<feature type="topological domain" description="Periplasmic" evidence="2">
    <location>
        <begin position="309"/>
        <end position="314"/>
    </location>
</feature>
<feature type="transmembrane region" description="Helical" evidence="2">
    <location>
        <begin position="315"/>
        <end position="335"/>
    </location>
</feature>
<feature type="topological domain" description="Cytoplasmic" evidence="2">
    <location>
        <begin position="336"/>
        <end position="346"/>
    </location>
</feature>
<feature type="transmembrane region" description="Helical" evidence="2">
    <location>
        <begin position="347"/>
        <end position="367"/>
    </location>
</feature>
<feature type="topological domain" description="Periplasmic" evidence="2">
    <location>
        <begin position="368"/>
        <end position="378"/>
    </location>
</feature>
<feature type="transmembrane region" description="Helical" evidence="2">
    <location>
        <begin position="379"/>
        <end position="399"/>
    </location>
</feature>
<feature type="topological domain" description="Cytoplasmic" evidence="2">
    <location>
        <begin position="400"/>
        <end position="410"/>
    </location>
</feature>
<dbReference type="EMBL" id="AE014075">
    <property type="protein sequence ID" value="AAN79400.1"/>
    <property type="status" value="ALT_INIT"/>
    <property type="molecule type" value="Genomic_DNA"/>
</dbReference>
<dbReference type="RefSeq" id="WP_001180089.1">
    <property type="nucleotide sequence ID" value="NZ_CP051263.1"/>
</dbReference>
<dbReference type="SMR" id="P0AEY9"/>
<dbReference type="STRING" id="199310.c0927"/>
<dbReference type="KEGG" id="ecc:c0927"/>
<dbReference type="eggNOG" id="COG2814">
    <property type="taxonomic scope" value="Bacteria"/>
</dbReference>
<dbReference type="HOGENOM" id="CLU_001265_47_2_6"/>
<dbReference type="Proteomes" id="UP000001410">
    <property type="component" value="Chromosome"/>
</dbReference>
<dbReference type="GO" id="GO:0005886">
    <property type="term" value="C:plasma membrane"/>
    <property type="evidence" value="ECO:0007669"/>
    <property type="project" value="UniProtKB-SubCell"/>
</dbReference>
<dbReference type="GO" id="GO:0015385">
    <property type="term" value="F:sodium:proton antiporter activity"/>
    <property type="evidence" value="ECO:0007669"/>
    <property type="project" value="TreeGrafter"/>
</dbReference>
<dbReference type="GO" id="GO:0046677">
    <property type="term" value="P:response to antibiotic"/>
    <property type="evidence" value="ECO:0007669"/>
    <property type="project" value="UniProtKB-KW"/>
</dbReference>
<dbReference type="GO" id="GO:1990961">
    <property type="term" value="P:xenobiotic detoxification by transmembrane export across the plasma membrane"/>
    <property type="evidence" value="ECO:0007669"/>
    <property type="project" value="TreeGrafter"/>
</dbReference>
<dbReference type="CDD" id="cd17320">
    <property type="entry name" value="MFS_MdfA_MDR_like"/>
    <property type="match status" value="1"/>
</dbReference>
<dbReference type="FunFam" id="1.20.1720.10:FF:000008">
    <property type="entry name" value="Multidrug transporter MdfA"/>
    <property type="match status" value="1"/>
</dbReference>
<dbReference type="Gene3D" id="1.20.1720.10">
    <property type="entry name" value="Multidrug resistance protein D"/>
    <property type="match status" value="1"/>
</dbReference>
<dbReference type="InterPro" id="IPR011701">
    <property type="entry name" value="MFS"/>
</dbReference>
<dbReference type="InterPro" id="IPR020846">
    <property type="entry name" value="MFS_dom"/>
</dbReference>
<dbReference type="InterPro" id="IPR036259">
    <property type="entry name" value="MFS_trans_sf"/>
</dbReference>
<dbReference type="InterPro" id="IPR005829">
    <property type="entry name" value="Sugar_transporter_CS"/>
</dbReference>
<dbReference type="NCBIfam" id="NF011931">
    <property type="entry name" value="PRK15402.1"/>
    <property type="match status" value="1"/>
</dbReference>
<dbReference type="PANTHER" id="PTHR23502">
    <property type="entry name" value="MAJOR FACILITATOR SUPERFAMILY"/>
    <property type="match status" value="1"/>
</dbReference>
<dbReference type="PANTHER" id="PTHR23502:SF43">
    <property type="entry name" value="MULTIDRUG TRANSPORTER MDFA"/>
    <property type="match status" value="1"/>
</dbReference>
<dbReference type="Pfam" id="PF07690">
    <property type="entry name" value="MFS_1"/>
    <property type="match status" value="1"/>
</dbReference>
<dbReference type="SUPFAM" id="SSF103473">
    <property type="entry name" value="MFS general substrate transporter"/>
    <property type="match status" value="1"/>
</dbReference>
<dbReference type="PROSITE" id="PS50850">
    <property type="entry name" value="MFS"/>
    <property type="match status" value="1"/>
</dbReference>
<organism>
    <name type="scientific">Escherichia coli O6:H1 (strain CFT073 / ATCC 700928 / UPEC)</name>
    <dbReference type="NCBI Taxonomy" id="199310"/>
    <lineage>
        <taxon>Bacteria</taxon>
        <taxon>Pseudomonadati</taxon>
        <taxon>Pseudomonadota</taxon>
        <taxon>Gammaproteobacteria</taxon>
        <taxon>Enterobacterales</taxon>
        <taxon>Enterobacteriaceae</taxon>
        <taxon>Escherichia</taxon>
    </lineage>
</organism>
<gene>
    <name type="primary">mdfA</name>
    <name type="synonym">cmr</name>
    <name type="ordered locus">c0927</name>
</gene>
<comment type="function">
    <text evidence="1">Efflux pump driven by the proton motive force. Confers resistance to a broad spectrum of chemically unrelated drugs (By similarity).</text>
</comment>
<comment type="subunit">
    <text evidence="1">Monomer.</text>
</comment>
<comment type="subcellular location">
    <subcellularLocation>
        <location evidence="1">Cell inner membrane</location>
        <topology evidence="1">Multi-pass membrane protein</topology>
    </subcellularLocation>
</comment>
<comment type="similarity">
    <text evidence="3">Belongs to the major facilitator superfamily. MdfA family.</text>
</comment>
<comment type="sequence caution" evidence="3">
    <conflict type="erroneous initiation">
        <sequence resource="EMBL-CDS" id="AAN79400"/>
    </conflict>
    <text>Extended N-terminus.</text>
</comment>